<dbReference type="EMBL" id="CP000155">
    <property type="protein sequence ID" value="ABC31496.1"/>
    <property type="molecule type" value="Genomic_DNA"/>
</dbReference>
<dbReference type="RefSeq" id="WP_011398561.1">
    <property type="nucleotide sequence ID" value="NC_007645.1"/>
</dbReference>
<dbReference type="SMR" id="Q2SCX8"/>
<dbReference type="STRING" id="349521.HCH_04801"/>
<dbReference type="KEGG" id="hch:HCH_04801"/>
<dbReference type="eggNOG" id="COG3022">
    <property type="taxonomic scope" value="Bacteria"/>
</dbReference>
<dbReference type="HOGENOM" id="CLU_061989_0_0_6"/>
<dbReference type="OrthoDB" id="9777133at2"/>
<dbReference type="Proteomes" id="UP000000238">
    <property type="component" value="Chromosome"/>
</dbReference>
<dbReference type="GO" id="GO:0005829">
    <property type="term" value="C:cytosol"/>
    <property type="evidence" value="ECO:0007669"/>
    <property type="project" value="TreeGrafter"/>
</dbReference>
<dbReference type="GO" id="GO:0033194">
    <property type="term" value="P:response to hydroperoxide"/>
    <property type="evidence" value="ECO:0007669"/>
    <property type="project" value="TreeGrafter"/>
</dbReference>
<dbReference type="HAMAP" id="MF_00652">
    <property type="entry name" value="UPF0246"/>
    <property type="match status" value="1"/>
</dbReference>
<dbReference type="InterPro" id="IPR005583">
    <property type="entry name" value="YaaA"/>
</dbReference>
<dbReference type="NCBIfam" id="NF002541">
    <property type="entry name" value="PRK02101.1-1"/>
    <property type="match status" value="1"/>
</dbReference>
<dbReference type="NCBIfam" id="NF002542">
    <property type="entry name" value="PRK02101.1-3"/>
    <property type="match status" value="1"/>
</dbReference>
<dbReference type="PANTHER" id="PTHR30283:SF4">
    <property type="entry name" value="PEROXIDE STRESS RESISTANCE PROTEIN YAAA"/>
    <property type="match status" value="1"/>
</dbReference>
<dbReference type="PANTHER" id="PTHR30283">
    <property type="entry name" value="PEROXIDE STRESS RESPONSE PROTEIN YAAA"/>
    <property type="match status" value="1"/>
</dbReference>
<dbReference type="Pfam" id="PF03883">
    <property type="entry name" value="H2O2_YaaD"/>
    <property type="match status" value="1"/>
</dbReference>
<reference key="1">
    <citation type="journal article" date="2005" name="Nucleic Acids Res.">
        <title>Genomic blueprint of Hahella chejuensis, a marine microbe producing an algicidal agent.</title>
        <authorList>
            <person name="Jeong H."/>
            <person name="Yim J.H."/>
            <person name="Lee C."/>
            <person name="Choi S.-H."/>
            <person name="Park Y.K."/>
            <person name="Yoon S.H."/>
            <person name="Hur C.-G."/>
            <person name="Kang H.-Y."/>
            <person name="Kim D."/>
            <person name="Lee H.H."/>
            <person name="Park K.H."/>
            <person name="Park S.-H."/>
            <person name="Park H.-S."/>
            <person name="Lee H.K."/>
            <person name="Oh T.K."/>
            <person name="Kim J.F."/>
        </authorList>
    </citation>
    <scope>NUCLEOTIDE SEQUENCE [LARGE SCALE GENOMIC DNA]</scope>
    <source>
        <strain>KCTC 2396</strain>
    </source>
</reference>
<feature type="chain" id="PRO_0000262023" description="UPF0246 protein HCH_04801">
    <location>
        <begin position="1"/>
        <end position="256"/>
    </location>
</feature>
<keyword id="KW-1185">Reference proteome</keyword>
<accession>Q2SCX8</accession>
<gene>
    <name type="ordered locus">HCH_04801</name>
</gene>
<comment type="similarity">
    <text evidence="1">Belongs to the UPF0246 family.</text>
</comment>
<evidence type="ECO:0000255" key="1">
    <source>
        <dbReference type="HAMAP-Rule" id="MF_00652"/>
    </source>
</evidence>
<organism>
    <name type="scientific">Hahella chejuensis (strain KCTC 2396)</name>
    <dbReference type="NCBI Taxonomy" id="349521"/>
    <lineage>
        <taxon>Bacteria</taxon>
        <taxon>Pseudomonadati</taxon>
        <taxon>Pseudomonadota</taxon>
        <taxon>Gammaproteobacteria</taxon>
        <taxon>Oceanospirillales</taxon>
        <taxon>Hahellaceae</taxon>
        <taxon>Hahella</taxon>
    </lineage>
</organism>
<proteinExistence type="inferred from homology"/>
<name>Y4801_HAHCH</name>
<protein>
    <recommendedName>
        <fullName evidence="1">UPF0246 protein HCH_04801</fullName>
    </recommendedName>
</protein>
<sequence length="256" mass="29220">MLIVVSPAKTLDYETPVPTTENTQPRFLPQSAELVDILKQKEPWRLSELMGVSDELATLNANRYQSWSLPFNEDNARQALFAFKGDVYTGLDAYSLEQDAISAAQRQLRILSGLYGVLRPLDLMQPYRLEMGTRLQNAKGANLYRFWGDTLTQSLNEEVRETGADVLINLASNEYYKAVNEKKLAVPVITPMFLDMKGGKYKVVSFWAKKARGMMTRYILQNRLQRPEEIKNFDTDGYSYNPALSDGAQWAFTRDH</sequence>